<proteinExistence type="evidence at transcript level"/>
<feature type="chain" id="PRO_0000303671" description="Cation transporter HKT1;5">
    <location>
        <begin position="1"/>
        <end position="554"/>
    </location>
</feature>
<feature type="topological domain" description="Cytoplasmic" evidence="2">
    <location>
        <begin position="1"/>
        <end position="25"/>
    </location>
</feature>
<feature type="transmembrane region" description="Helical; Name=1" evidence="2">
    <location>
        <begin position="26"/>
        <end position="46"/>
    </location>
</feature>
<feature type="transmembrane region" description="Helical; Name=2" evidence="2">
    <location>
        <begin position="90"/>
        <end position="110"/>
    </location>
</feature>
<feature type="topological domain" description="Cytoplasmic" evidence="2">
    <location>
        <begin position="111"/>
        <end position="207"/>
    </location>
</feature>
<feature type="transmembrane region" description="Helical; Name=3" evidence="2">
    <location>
        <begin position="208"/>
        <end position="230"/>
    </location>
</feature>
<feature type="transmembrane region" description="Helical; Name=4" evidence="2">
    <location>
        <begin position="280"/>
        <end position="300"/>
    </location>
</feature>
<feature type="topological domain" description="Cytoplasmic" evidence="2">
    <location>
        <begin position="301"/>
        <end position="341"/>
    </location>
</feature>
<feature type="transmembrane region" description="Helical; Name=5" evidence="2">
    <location>
        <begin position="342"/>
        <end position="362"/>
    </location>
</feature>
<feature type="transmembrane region" description="Helical; Name=6" evidence="2">
    <location>
        <begin position="403"/>
        <end position="423"/>
    </location>
</feature>
<feature type="topological domain" description="Cytoplasmic" evidence="2">
    <location>
        <begin position="424"/>
        <end position="443"/>
    </location>
</feature>
<feature type="transmembrane region" description="Helical; Name=7" evidence="2">
    <location>
        <begin position="444"/>
        <end position="464"/>
    </location>
</feature>
<feature type="transmembrane region" description="Helical; Name=8" evidence="2">
    <location>
        <begin position="518"/>
        <end position="538"/>
    </location>
</feature>
<feature type="topological domain" description="Cytoplasmic" evidence="2">
    <location>
        <begin position="539"/>
        <end position="554"/>
    </location>
</feature>
<feature type="sequence variant" description="In strain: cv. Nona Bokra and cv. Pokkali; higher sodium transport activity." evidence="3 4">
    <original>R</original>
    <variation>H</variation>
    <location>
        <position position="184"/>
    </location>
</feature>
<feature type="sequence variant" description="In strain: cv. Nona Bokra and cv. Pokkali; higher sodium transport activity." evidence="3 4">
    <original>H</original>
    <variation>D</variation>
    <location>
        <position position="332"/>
    </location>
</feature>
<feature type="sequence variant" description="In strain: cv. Nona Bokra and cv. Pokkali; higher sodium transport activity." evidence="3 4">
    <original>L</original>
    <variation>V</variation>
    <location>
        <position position="395"/>
    </location>
</feature>
<feature type="sequence conflict" description="In Ref. 2; ADM87303, 4; QXE97983 and 5; EEC70498." evidence="8" ref="2 4 5">
    <original>D</original>
    <variation>N</variation>
    <location>
        <position position="128"/>
    </location>
</feature>
<organism>
    <name type="scientific">Oryza sativa subsp. indica</name>
    <name type="common">Rice</name>
    <dbReference type="NCBI Taxonomy" id="39946"/>
    <lineage>
        <taxon>Eukaryota</taxon>
        <taxon>Viridiplantae</taxon>
        <taxon>Streptophyta</taxon>
        <taxon>Embryophyta</taxon>
        <taxon>Tracheophyta</taxon>
        <taxon>Spermatophyta</taxon>
        <taxon>Magnoliopsida</taxon>
        <taxon>Liliopsida</taxon>
        <taxon>Poales</taxon>
        <taxon>Poaceae</taxon>
        <taxon>BOP clade</taxon>
        <taxon>Oryzoideae</taxon>
        <taxon>Oryzeae</taxon>
        <taxon>Oryzinae</taxon>
        <taxon>Oryza</taxon>
        <taxon>Oryza sativa</taxon>
    </lineage>
</organism>
<gene>
    <name evidence="7" type="primary">HKT1;5</name>
    <name evidence="5" type="synonym">HKT8</name>
    <name evidence="6" type="synonym">SKC1</name>
    <name evidence="10" type="ORF">OsI_01579</name>
</gene>
<accession>A2WNZ9</accession>
<accession>A3FFK6</accession>
<accession>B8A6S2</accession>
<accession>Q3YAF4</accession>
<accession>Q8LQB2</accession>
<sequence>MSSLDATTPRYDEFKRIYHLFLFHAHPFWLQLLYFLFISLLGFLMLKALPMKTSMVPRPMDLDLIFTSVSATTVSSMVAVEMESFSNSQLLLITLLMLLGGEVFTSILGLYFTNAKYSSKMIATLPDDDDHGGSGKPPPATTSPSSTLVELELAPPMDVVVVNPTTTATTHDEVELGLGRRNKRGCTCTTTHTSSSSSASKTTTTRLLMFVVMGYHAVVHVAGYTAIVVYLSAVGGAGAVVAGKGISAHTFAIFTVVSTFANCGFVPTNEGMVSFRSFPGLLLLVMPHVLLGNTLFPVFLRLAIAALERVTGWPELGELLIRRRRGGGEGYHHLLPSSRTRFLALTVAVLVVAQLALFCAMEWGSDGLRGLTAGQKLVGALFMAVNSRHSGEMVLDLSTVSSAVVVLYVVMMYLPPYTTFVPVQDKHQQTGAQSGQEGSSSSSIWQKLLMSPLSCLAIFIVVICITERRQIADDPINYSVLNIVVEVISAYGNVGFSTGYSCARQVRPDGSCRDLWVGFSGKWSKQGKLTLMAVMFYGRLKKFSLHGGQAWKIE</sequence>
<dbReference type="EMBL" id="DQ148410">
    <property type="protein sequence ID" value="AAZ76552.1"/>
    <property type="molecule type" value="mRNA"/>
</dbReference>
<dbReference type="EMBL" id="HQ162137">
    <property type="protein sequence ID" value="ADM87303.1"/>
    <property type="molecule type" value="mRNA"/>
</dbReference>
<dbReference type="EMBL" id="EF373553">
    <property type="protein sequence ID" value="ABN48306.1"/>
    <property type="molecule type" value="mRNA"/>
</dbReference>
<dbReference type="EMBL" id="MT495789">
    <property type="protein sequence ID" value="QXE97983.1"/>
    <property type="molecule type" value="Genomic_DNA"/>
</dbReference>
<dbReference type="EMBL" id="CM000126">
    <property type="protein sequence ID" value="EEC70498.1"/>
    <property type="molecule type" value="Genomic_DNA"/>
</dbReference>
<dbReference type="SMR" id="A2WNZ9"/>
<dbReference type="STRING" id="39946.B8A6S2"/>
<dbReference type="Proteomes" id="UP000007015">
    <property type="component" value="Chromosome 1"/>
</dbReference>
<dbReference type="GO" id="GO:0005886">
    <property type="term" value="C:plasma membrane"/>
    <property type="evidence" value="ECO:0007669"/>
    <property type="project" value="TreeGrafter"/>
</dbReference>
<dbReference type="GO" id="GO:0008324">
    <property type="term" value="F:monoatomic cation transmembrane transporter activity"/>
    <property type="evidence" value="ECO:0007669"/>
    <property type="project" value="InterPro"/>
</dbReference>
<dbReference type="GO" id="GO:0098662">
    <property type="term" value="P:inorganic cation transmembrane transport"/>
    <property type="evidence" value="ECO:0007669"/>
    <property type="project" value="UniProtKB-ARBA"/>
</dbReference>
<dbReference type="GO" id="GO:0006814">
    <property type="term" value="P:sodium ion transport"/>
    <property type="evidence" value="ECO:0007669"/>
    <property type="project" value="UniProtKB-KW"/>
</dbReference>
<dbReference type="InterPro" id="IPR003445">
    <property type="entry name" value="Cat_transpt"/>
</dbReference>
<dbReference type="InterPro" id="IPR051143">
    <property type="entry name" value="TrkH_K-transport"/>
</dbReference>
<dbReference type="PANTHER" id="PTHR31064:SF30">
    <property type="entry name" value="HIGH-AFFINITY POTASSIUM TRANSPORT PROTEIN-RELATED"/>
    <property type="match status" value="1"/>
</dbReference>
<dbReference type="PANTHER" id="PTHR31064">
    <property type="entry name" value="POTASSIUM TRANSPORT PROTEIN DDB_G0292412-RELATED"/>
    <property type="match status" value="1"/>
</dbReference>
<dbReference type="Pfam" id="PF02386">
    <property type="entry name" value="TrkH"/>
    <property type="match status" value="1"/>
</dbReference>
<reference key="1">
    <citation type="journal article" date="2005" name="Nat. Genet.">
        <title>A rice quantitative trait locus for salt tolerance encodes a sodium transporter.</title>
        <authorList>
            <person name="Ren Z.-H."/>
            <person name="Gao J.-P."/>
            <person name="Li L.-G."/>
            <person name="Cai X.-L."/>
            <person name="Huang W."/>
            <person name="Chao D.-Y."/>
            <person name="Zhu M.-Z."/>
            <person name="Wang Z.-Y."/>
            <person name="Luan S."/>
            <person name="Lin H.-X."/>
        </authorList>
    </citation>
    <scope>NUCLEOTIDE SEQUENCE [MRNA]</scope>
    <scope>FUNCTION</scope>
    <scope>SUBCELLULAR LOCATION</scope>
    <scope>TISSUE SPECIFICITY</scope>
    <scope>INDUCTION</scope>
    <scope>VARIANTS HIS-184; ASP-332 AND VAL-395</scope>
    <source>
        <strain>cv. Nona Bokra</strain>
    </source>
</reference>
<reference key="2">
    <citation type="journal article" date="2011" name="Mol. Plant">
        <title>Root-specific transcript profiling of contrasting rice genotypes in response to salinity stress.</title>
        <authorList>
            <person name="Cotsaftis O."/>
            <person name="Plett D."/>
            <person name="Johnson A.A."/>
            <person name="Walia H."/>
            <person name="Wilson C."/>
            <person name="Ismail A.M."/>
            <person name="Close T.J."/>
            <person name="Tester M."/>
            <person name="Baumann U."/>
        </authorList>
    </citation>
    <scope>NUCLEOTIDE SEQUENCE [MRNA]</scope>
</reference>
<reference key="3">
    <citation type="submission" date="2007-01" db="EMBL/GenBank/DDBJ databases">
        <title>Mining for HKT allelic variability in rice.</title>
        <authorList>
            <person name="Cotsaftis O."/>
            <person name="Tester M."/>
        </authorList>
    </citation>
    <scope>NUCLEOTIDE SEQUENCE [MRNA]</scope>
    <scope>VARIANTS HIS-184; ASP-332 AND VAL-395</scope>
    <source>
        <strain>cv. Pokkali</strain>
        <tissue>Seedling</tissue>
    </source>
</reference>
<reference key="4">
    <citation type="submission" date="2020-05" db="EMBL/GenBank/DDBJ databases">
        <title>Selection of salt-tolerant silage rice through in vitro screening and saltol QTL analysis.</title>
        <authorList>
            <person name="Cho C."/>
            <person name="Kim K.H."/>
            <person name="Ahn E.-K."/>
            <person name="Park H."/>
            <person name="Choi M.-S."/>
            <person name="Chun J."/>
            <person name="Seo M.-S."/>
            <person name="Jin M."/>
            <person name="Kim D.-Y."/>
        </authorList>
    </citation>
    <scope>NUCLEOTIDE SEQUENCE [GENOMIC DNA]</scope>
</reference>
<reference key="5">
    <citation type="journal article" date="2005" name="PLoS Biol.">
        <title>The genomes of Oryza sativa: a history of duplications.</title>
        <authorList>
            <person name="Yu J."/>
            <person name="Wang J."/>
            <person name="Lin W."/>
            <person name="Li S."/>
            <person name="Li H."/>
            <person name="Zhou J."/>
            <person name="Ni P."/>
            <person name="Dong W."/>
            <person name="Hu S."/>
            <person name="Zeng C."/>
            <person name="Zhang J."/>
            <person name="Zhang Y."/>
            <person name="Li R."/>
            <person name="Xu Z."/>
            <person name="Li S."/>
            <person name="Li X."/>
            <person name="Zheng H."/>
            <person name="Cong L."/>
            <person name="Lin L."/>
            <person name="Yin J."/>
            <person name="Geng J."/>
            <person name="Li G."/>
            <person name="Shi J."/>
            <person name="Liu J."/>
            <person name="Lv H."/>
            <person name="Li J."/>
            <person name="Wang J."/>
            <person name="Deng Y."/>
            <person name="Ran L."/>
            <person name="Shi X."/>
            <person name="Wang X."/>
            <person name="Wu Q."/>
            <person name="Li C."/>
            <person name="Ren X."/>
            <person name="Wang J."/>
            <person name="Wang X."/>
            <person name="Li D."/>
            <person name="Liu D."/>
            <person name="Zhang X."/>
            <person name="Ji Z."/>
            <person name="Zhao W."/>
            <person name="Sun Y."/>
            <person name="Zhang Z."/>
            <person name="Bao J."/>
            <person name="Han Y."/>
            <person name="Dong L."/>
            <person name="Ji J."/>
            <person name="Chen P."/>
            <person name="Wu S."/>
            <person name="Liu J."/>
            <person name="Xiao Y."/>
            <person name="Bu D."/>
            <person name="Tan J."/>
            <person name="Yang L."/>
            <person name="Ye C."/>
            <person name="Zhang J."/>
            <person name="Xu J."/>
            <person name="Zhou Y."/>
            <person name="Yu Y."/>
            <person name="Zhang B."/>
            <person name="Zhuang S."/>
            <person name="Wei H."/>
            <person name="Liu B."/>
            <person name="Lei M."/>
            <person name="Yu H."/>
            <person name="Li Y."/>
            <person name="Xu H."/>
            <person name="Wei S."/>
            <person name="He X."/>
            <person name="Fang L."/>
            <person name="Zhang Z."/>
            <person name="Zhang Y."/>
            <person name="Huang X."/>
            <person name="Su Z."/>
            <person name="Tong W."/>
            <person name="Li J."/>
            <person name="Tong Z."/>
            <person name="Li S."/>
            <person name="Ye J."/>
            <person name="Wang L."/>
            <person name="Fang L."/>
            <person name="Lei T."/>
            <person name="Chen C.-S."/>
            <person name="Chen H.-C."/>
            <person name="Xu Z."/>
            <person name="Li H."/>
            <person name="Huang H."/>
            <person name="Zhang F."/>
            <person name="Xu H."/>
            <person name="Li N."/>
            <person name="Zhao C."/>
            <person name="Li S."/>
            <person name="Dong L."/>
            <person name="Huang Y."/>
            <person name="Li L."/>
            <person name="Xi Y."/>
            <person name="Qi Q."/>
            <person name="Li W."/>
            <person name="Zhang B."/>
            <person name="Hu W."/>
            <person name="Zhang Y."/>
            <person name="Tian X."/>
            <person name="Jiao Y."/>
            <person name="Liang X."/>
            <person name="Jin J."/>
            <person name="Gao L."/>
            <person name="Zheng W."/>
            <person name="Hao B."/>
            <person name="Liu S.-M."/>
            <person name="Wang W."/>
            <person name="Yuan L."/>
            <person name="Cao M."/>
            <person name="McDermott J."/>
            <person name="Samudrala R."/>
            <person name="Wang J."/>
            <person name="Wong G.K.-S."/>
            <person name="Yang H."/>
        </authorList>
    </citation>
    <scope>NUCLEOTIDE SEQUENCE [LARGE SCALE GENOMIC DNA]</scope>
    <source>
        <strain>cv. 93-11</strain>
    </source>
</reference>
<reference key="6">
    <citation type="journal article" date="2003" name="Plant J.">
        <title>Sodium transport and HKT transporters: the rice model.</title>
        <authorList>
            <person name="Garciadeblas B."/>
            <person name="Senn M.E."/>
            <person name="Banuelos M.A."/>
            <person name="Rodriguez-Navarro A."/>
        </authorList>
    </citation>
    <scope>NOMENCLATURE</scope>
</reference>
<reference key="7">
    <citation type="journal article" date="2006" name="Trends Plant Sci.">
        <title>Nomenclature for HKT transporters, key determinants of plant salinity tolerance.</title>
        <authorList>
            <person name="Platten J.D."/>
            <person name="Cotsaftis O."/>
            <person name="Berthomieu P."/>
            <person name="Bohnert H."/>
            <person name="Davenport R.J."/>
            <person name="Fairbairn D.J."/>
            <person name="Horie T."/>
            <person name="Leigh R.A."/>
            <person name="Lin H.X."/>
            <person name="Luan S."/>
            <person name="Maeser P."/>
            <person name="Pantoja O."/>
            <person name="Rodriguez-Navarro A."/>
            <person name="Schachtman D.P."/>
            <person name="Schroeder J.I."/>
            <person name="Sentenac H."/>
            <person name="Uozumi N."/>
            <person name="Very A.A."/>
            <person name="Zhu J.K."/>
            <person name="Dennis E.S."/>
            <person name="Tester M."/>
        </authorList>
    </citation>
    <scope>GENE FAMILY</scope>
    <scope>NOMENCLATURE</scope>
</reference>
<comment type="function">
    <text evidence="1 3">Sodium transporter that under salt stress mediates sodium exclusion in the phloem to prevent sodium transfer to young leaf blades and reproductive tissues (By similarity). Contributes to salt-tolerance in cultivars indica Nona Bokra and Pokkali (PubMed:16155566).</text>
</comment>
<comment type="catalytic activity">
    <reaction evidence="1">
        <text>Na(+)(in) = Na(+)(out)</text>
        <dbReference type="Rhea" id="RHEA:34963"/>
        <dbReference type="ChEBI" id="CHEBI:29101"/>
    </reaction>
</comment>
<comment type="subcellular location">
    <subcellularLocation>
        <location evidence="9">Membrane</location>
        <topology evidence="2">Multi-pass membrane protein</topology>
    </subcellularLocation>
</comment>
<comment type="tissue specificity">
    <text evidence="3">Mainly expressed in parenchyma cells bordering xylem vessels of nodes, internodes, leaf sheath bases, roots and leaves. Expressed in phloem of leaf sheath bases.</text>
</comment>
<comment type="induction">
    <text evidence="3">By salt stress in roots.</text>
</comment>
<comment type="domain">
    <text evidence="8">HKT transporters are proposed to contain 4 pore-forming regions enclosed by transmembrane segments with each containing a potassium channel-like selectivity filter motif.</text>
</comment>
<comment type="similarity">
    <text evidence="8">Belongs to the TrkH potassium transport family. HKT (TC 2.A.38.3) subfamily.</text>
</comment>
<name>HKT15_ORYSI</name>
<evidence type="ECO:0000250" key="1">
    <source>
        <dbReference type="UniProtKB" id="Q0JNB6"/>
    </source>
</evidence>
<evidence type="ECO:0000255" key="2"/>
<evidence type="ECO:0000269" key="3">
    <source>
    </source>
</evidence>
<evidence type="ECO:0000269" key="4">
    <source ref="3"/>
</evidence>
<evidence type="ECO:0000303" key="5">
    <source>
    </source>
</evidence>
<evidence type="ECO:0000303" key="6">
    <source>
    </source>
</evidence>
<evidence type="ECO:0000303" key="7">
    <source>
    </source>
</evidence>
<evidence type="ECO:0000305" key="8"/>
<evidence type="ECO:0000305" key="9">
    <source>
    </source>
</evidence>
<evidence type="ECO:0000312" key="10">
    <source>
        <dbReference type="EMBL" id="EEC70498.1"/>
    </source>
</evidence>
<protein>
    <recommendedName>
        <fullName evidence="7">Cation transporter HKT1;5</fullName>
        <shortName evidence="7">OsHKT1;5</shortName>
    </recommendedName>
    <alternativeName>
        <fullName evidence="5">Cation transporter HKT8</fullName>
        <shortName evidence="5">OsHKT8</shortName>
    </alternativeName>
</protein>
<keyword id="KW-0406">Ion transport</keyword>
<keyword id="KW-0472">Membrane</keyword>
<keyword id="KW-1185">Reference proteome</keyword>
<keyword id="KW-0915">Sodium</keyword>
<keyword id="KW-0739">Sodium transport</keyword>
<keyword id="KW-0346">Stress response</keyword>
<keyword id="KW-0812">Transmembrane</keyword>
<keyword id="KW-1133">Transmembrane helix</keyword>
<keyword id="KW-0813">Transport</keyword>